<dbReference type="EMBL" id="AJ242972">
    <property type="protein sequence ID" value="CAB58118.1"/>
    <property type="molecule type" value="mRNA"/>
</dbReference>
<dbReference type="EMBL" id="AL136835">
    <property type="protein sequence ID" value="CAB66769.1"/>
    <property type="molecule type" value="mRNA"/>
</dbReference>
<dbReference type="EMBL" id="AK022871">
    <property type="protein sequence ID" value="BAB14283.1"/>
    <property type="status" value="ALT_INIT"/>
    <property type="molecule type" value="mRNA"/>
</dbReference>
<dbReference type="EMBL" id="AK127123">
    <property type="protein sequence ID" value="BAG54438.1"/>
    <property type="molecule type" value="mRNA"/>
</dbReference>
<dbReference type="EMBL" id="AC136297">
    <property type="status" value="NOT_ANNOTATED_CDS"/>
    <property type="molecule type" value="Genomic_DNA"/>
</dbReference>
<dbReference type="EMBL" id="BC004420">
    <property type="protein sequence ID" value="AAH04420.1"/>
    <property type="molecule type" value="mRNA"/>
</dbReference>
<dbReference type="EMBL" id="BC012057">
    <property type="protein sequence ID" value="AAH12057.1"/>
    <property type="molecule type" value="mRNA"/>
</dbReference>
<dbReference type="EMBL" id="BC018272">
    <property type="protein sequence ID" value="AAH18272.1"/>
    <property type="molecule type" value="mRNA"/>
</dbReference>
<dbReference type="CCDS" id="CCDS7723.1">
    <molecule id="Q9H0E2-1"/>
</dbReference>
<dbReference type="CCDS" id="CCDS81532.1">
    <molecule id="Q9H0E2-2"/>
</dbReference>
<dbReference type="RefSeq" id="NP_001305441.1">
    <property type="nucleotide sequence ID" value="NM_001318512.1"/>
</dbReference>
<dbReference type="RefSeq" id="NP_001305443.1">
    <molecule id="Q9H0E2-2"/>
    <property type="nucleotide sequence ID" value="NM_001318514.2"/>
</dbReference>
<dbReference type="RefSeq" id="NP_001305444.1">
    <property type="nucleotide sequence ID" value="NM_001318515.1"/>
</dbReference>
<dbReference type="RefSeq" id="NP_001305445.1">
    <property type="nucleotide sequence ID" value="NM_001318516.1"/>
</dbReference>
<dbReference type="RefSeq" id="NP_061882.2">
    <molecule id="Q9H0E2-1"/>
    <property type="nucleotide sequence ID" value="NM_019009.3"/>
</dbReference>
<dbReference type="PDB" id="1WGL">
    <property type="method" value="NMR"/>
    <property type="chains" value="A=229-274"/>
</dbReference>
<dbReference type="PDB" id="2N31">
    <property type="method" value="NMR"/>
    <property type="chains" value="A=1-53"/>
</dbReference>
<dbReference type="PDBsum" id="1WGL"/>
<dbReference type="PDBsum" id="2N31"/>
<dbReference type="BMRB" id="Q9H0E2"/>
<dbReference type="SMR" id="Q9H0E2"/>
<dbReference type="BioGRID" id="119978">
    <property type="interactions" value="364"/>
</dbReference>
<dbReference type="CORUM" id="Q9H0E2"/>
<dbReference type="DIP" id="DIP-30845N"/>
<dbReference type="FunCoup" id="Q9H0E2">
    <property type="interactions" value="667"/>
</dbReference>
<dbReference type="IntAct" id="Q9H0E2">
    <property type="interactions" value="179"/>
</dbReference>
<dbReference type="MINT" id="Q9H0E2"/>
<dbReference type="STRING" id="9606.ENSP00000314733"/>
<dbReference type="GlyGen" id="Q9H0E2">
    <property type="glycosylation" value="1 site, 1 O-linked glycan (1 site)"/>
</dbReference>
<dbReference type="iPTMnet" id="Q9H0E2"/>
<dbReference type="MetOSite" id="Q9H0E2"/>
<dbReference type="PhosphoSitePlus" id="Q9H0E2"/>
<dbReference type="SwissPalm" id="Q9H0E2"/>
<dbReference type="BioMuta" id="TOLLIP"/>
<dbReference type="DMDM" id="20140803"/>
<dbReference type="jPOST" id="Q9H0E2"/>
<dbReference type="MassIVE" id="Q9H0E2"/>
<dbReference type="PaxDb" id="9606-ENSP00000314733"/>
<dbReference type="PeptideAtlas" id="Q9H0E2"/>
<dbReference type="ProteomicsDB" id="3808"/>
<dbReference type="ProteomicsDB" id="80260">
    <molecule id="Q9H0E2-1"/>
</dbReference>
<dbReference type="Pumba" id="Q9H0E2"/>
<dbReference type="Antibodypedia" id="10168">
    <property type="antibodies" value="565 antibodies from 40 providers"/>
</dbReference>
<dbReference type="DNASU" id="54472"/>
<dbReference type="Ensembl" id="ENST00000317204.11">
    <molecule id="Q9H0E2-1"/>
    <property type="protein sequence ID" value="ENSP00000314733.5"/>
    <property type="gene ID" value="ENSG00000078902.16"/>
</dbReference>
<dbReference type="Ensembl" id="ENST00000527886.5">
    <molecule id="Q9H0E2-2"/>
    <property type="protein sequence ID" value="ENSP00000434035.1"/>
    <property type="gene ID" value="ENSG00000078902.16"/>
</dbReference>
<dbReference type="Ensembl" id="ENST00000707519.1">
    <molecule id="Q9H0E2-1"/>
    <property type="protein sequence ID" value="ENSP00000516890.1"/>
    <property type="gene ID" value="ENSG00000291426.1"/>
</dbReference>
<dbReference type="Ensembl" id="ENST00000707520.1">
    <molecule id="Q9H0E2-2"/>
    <property type="protein sequence ID" value="ENSP00000516891.1"/>
    <property type="gene ID" value="ENSG00000291426.1"/>
</dbReference>
<dbReference type="GeneID" id="54472"/>
<dbReference type="KEGG" id="hsa:54472"/>
<dbReference type="MANE-Select" id="ENST00000317204.11">
    <property type="protein sequence ID" value="ENSP00000314733.5"/>
    <property type="RefSeq nucleotide sequence ID" value="NM_019009.4"/>
    <property type="RefSeq protein sequence ID" value="NP_061882.2"/>
</dbReference>
<dbReference type="UCSC" id="uc001ltd.4">
    <molecule id="Q9H0E2-1"/>
    <property type="organism name" value="human"/>
</dbReference>
<dbReference type="AGR" id="HGNC:16476"/>
<dbReference type="CTD" id="54472"/>
<dbReference type="DisGeNET" id="54472"/>
<dbReference type="GeneCards" id="TOLLIP"/>
<dbReference type="HGNC" id="HGNC:16476">
    <property type="gene designation" value="TOLLIP"/>
</dbReference>
<dbReference type="HPA" id="ENSG00000078902">
    <property type="expression patterns" value="Low tissue specificity"/>
</dbReference>
<dbReference type="MIM" id="606277">
    <property type="type" value="gene"/>
</dbReference>
<dbReference type="neXtProt" id="NX_Q9H0E2"/>
<dbReference type="OpenTargets" id="ENSG00000078902"/>
<dbReference type="PharmGKB" id="PA134876213"/>
<dbReference type="VEuPathDB" id="HostDB:ENSG00000078902"/>
<dbReference type="eggNOG" id="ENOG502QWQA">
    <property type="taxonomic scope" value="Eukaryota"/>
</dbReference>
<dbReference type="GeneTree" id="ENSGT00390000013104"/>
<dbReference type="HOGENOM" id="CLU_067725_2_0_1"/>
<dbReference type="InParanoid" id="Q9H0E2"/>
<dbReference type="OMA" id="IYIQIFD"/>
<dbReference type="OrthoDB" id="9942608at2759"/>
<dbReference type="PAN-GO" id="Q9H0E2">
    <property type="GO annotations" value="4 GO annotations based on evolutionary models"/>
</dbReference>
<dbReference type="PhylomeDB" id="Q9H0E2"/>
<dbReference type="TreeFam" id="TF324180"/>
<dbReference type="PathwayCommons" id="Q9H0E2"/>
<dbReference type="Reactome" id="R-HSA-6798695">
    <property type="pathway name" value="Neutrophil degranulation"/>
</dbReference>
<dbReference type="Reactome" id="R-HSA-9020702">
    <property type="pathway name" value="Interleukin-1 signaling"/>
</dbReference>
<dbReference type="SignaLink" id="Q9H0E2"/>
<dbReference type="SIGNOR" id="Q9H0E2"/>
<dbReference type="BioGRID-ORCS" id="54472">
    <property type="hits" value="12 hits in 1159 CRISPR screens"/>
</dbReference>
<dbReference type="CD-CODE" id="FB4E32DD">
    <property type="entry name" value="Presynaptic clusters and postsynaptic densities"/>
</dbReference>
<dbReference type="ChiTaRS" id="TOLLIP">
    <property type="organism name" value="human"/>
</dbReference>
<dbReference type="EvolutionaryTrace" id="Q9H0E2"/>
<dbReference type="GeneWiki" id="TOLLIP"/>
<dbReference type="GenomeRNAi" id="54472"/>
<dbReference type="Pharos" id="Q9H0E2">
    <property type="development level" value="Tbio"/>
</dbReference>
<dbReference type="PRO" id="PR:Q9H0E2"/>
<dbReference type="Proteomes" id="UP000005640">
    <property type="component" value="Chromosome 11"/>
</dbReference>
<dbReference type="RNAct" id="Q9H0E2">
    <property type="molecule type" value="protein"/>
</dbReference>
<dbReference type="Bgee" id="ENSG00000078902">
    <property type="expression patterns" value="Expressed in right frontal lobe and 184 other cell types or tissues"/>
</dbReference>
<dbReference type="ExpressionAtlas" id="Q9H0E2">
    <property type="expression patterns" value="baseline and differential"/>
</dbReference>
<dbReference type="GO" id="GO:0035578">
    <property type="term" value="C:azurophil granule lumen"/>
    <property type="evidence" value="ECO:0000304"/>
    <property type="project" value="Reactome"/>
</dbReference>
<dbReference type="GO" id="GO:0005737">
    <property type="term" value="C:cytoplasm"/>
    <property type="evidence" value="ECO:0000318"/>
    <property type="project" value="GO_Central"/>
</dbReference>
<dbReference type="GO" id="GO:0005829">
    <property type="term" value="C:cytosol"/>
    <property type="evidence" value="ECO:0000304"/>
    <property type="project" value="Reactome"/>
</dbReference>
<dbReference type="GO" id="GO:0005769">
    <property type="term" value="C:early endosome"/>
    <property type="evidence" value="ECO:0007669"/>
    <property type="project" value="UniProtKB-SubCell"/>
</dbReference>
<dbReference type="GO" id="GO:0070062">
    <property type="term" value="C:extracellular exosome"/>
    <property type="evidence" value="ECO:0007005"/>
    <property type="project" value="UniProtKB"/>
</dbReference>
<dbReference type="GO" id="GO:0005576">
    <property type="term" value="C:extracellular region"/>
    <property type="evidence" value="ECO:0000304"/>
    <property type="project" value="Reactome"/>
</dbReference>
<dbReference type="GO" id="GO:0019897">
    <property type="term" value="C:extrinsic component of plasma membrane"/>
    <property type="evidence" value="ECO:0000305"/>
    <property type="project" value="UniProt"/>
</dbReference>
<dbReference type="GO" id="GO:0016604">
    <property type="term" value="C:nuclear body"/>
    <property type="evidence" value="ECO:0007669"/>
    <property type="project" value="Ensembl"/>
</dbReference>
<dbReference type="GO" id="GO:0048471">
    <property type="term" value="C:perinuclear region of cytoplasm"/>
    <property type="evidence" value="ECO:0007669"/>
    <property type="project" value="Ensembl"/>
</dbReference>
<dbReference type="GO" id="GO:0032991">
    <property type="term" value="C:protein-containing complex"/>
    <property type="evidence" value="ECO:0000314"/>
    <property type="project" value="UniProtKB"/>
</dbReference>
<dbReference type="GO" id="GO:0035580">
    <property type="term" value="C:specific granule lumen"/>
    <property type="evidence" value="ECO:0000304"/>
    <property type="project" value="Reactome"/>
</dbReference>
<dbReference type="GO" id="GO:0005150">
    <property type="term" value="F:interleukin-1, type I receptor binding"/>
    <property type="evidence" value="ECO:0007669"/>
    <property type="project" value="Ensembl"/>
</dbReference>
<dbReference type="GO" id="GO:0019900">
    <property type="term" value="F:kinase binding"/>
    <property type="evidence" value="ECO:0000353"/>
    <property type="project" value="UniProtKB"/>
</dbReference>
<dbReference type="GO" id="GO:0060090">
    <property type="term" value="F:molecular adaptor activity"/>
    <property type="evidence" value="ECO:0000314"/>
    <property type="project" value="UniProt"/>
</dbReference>
<dbReference type="GO" id="GO:0032183">
    <property type="term" value="F:SUMO binding"/>
    <property type="evidence" value="ECO:0007669"/>
    <property type="project" value="Ensembl"/>
</dbReference>
<dbReference type="GO" id="GO:0035325">
    <property type="term" value="F:Toll-like receptor binding"/>
    <property type="evidence" value="ECO:0000353"/>
    <property type="project" value="UniProtKB"/>
</dbReference>
<dbReference type="GO" id="GO:0043130">
    <property type="term" value="F:ubiquitin binding"/>
    <property type="evidence" value="ECO:0000318"/>
    <property type="project" value="GO_Central"/>
</dbReference>
<dbReference type="GO" id="GO:0031624">
    <property type="term" value="F:ubiquitin conjugating enzyme binding"/>
    <property type="evidence" value="ECO:0000318"/>
    <property type="project" value="GO_Central"/>
</dbReference>
<dbReference type="GO" id="GO:0031625">
    <property type="term" value="F:ubiquitin protein ligase binding"/>
    <property type="evidence" value="ECO:0007669"/>
    <property type="project" value="Ensembl"/>
</dbReference>
<dbReference type="GO" id="GO:0006914">
    <property type="term" value="P:autophagy"/>
    <property type="evidence" value="ECO:0007669"/>
    <property type="project" value="UniProtKB-KW"/>
</dbReference>
<dbReference type="GO" id="GO:0030855">
    <property type="term" value="P:epithelial cell differentiation"/>
    <property type="evidence" value="ECO:0000270"/>
    <property type="project" value="UniProtKB"/>
</dbReference>
<dbReference type="GO" id="GO:0006954">
    <property type="term" value="P:inflammatory response"/>
    <property type="evidence" value="ECO:0007669"/>
    <property type="project" value="UniProtKB-KW"/>
</dbReference>
<dbReference type="GO" id="GO:0045087">
    <property type="term" value="P:innate immune response"/>
    <property type="evidence" value="ECO:0007669"/>
    <property type="project" value="UniProtKB-KW"/>
</dbReference>
<dbReference type="GO" id="GO:0070498">
    <property type="term" value="P:interleukin-1-mediated signaling pathway"/>
    <property type="evidence" value="ECO:0000314"/>
    <property type="project" value="UniProt"/>
</dbReference>
<dbReference type="GO" id="GO:0045321">
    <property type="term" value="P:leukocyte activation"/>
    <property type="evidence" value="ECO:0000303"/>
    <property type="project" value="UniProtKB"/>
</dbReference>
<dbReference type="GO" id="GO:0016310">
    <property type="term" value="P:phosphorylation"/>
    <property type="evidence" value="ECO:0000314"/>
    <property type="project" value="UniProtKB"/>
</dbReference>
<dbReference type="GO" id="GO:0033235">
    <property type="term" value="P:positive regulation of protein sumoylation"/>
    <property type="evidence" value="ECO:0007669"/>
    <property type="project" value="Ensembl"/>
</dbReference>
<dbReference type="GO" id="GO:0036010">
    <property type="term" value="P:protein localization to endosome"/>
    <property type="evidence" value="ECO:0000314"/>
    <property type="project" value="UniProtKB"/>
</dbReference>
<dbReference type="GO" id="GO:0007165">
    <property type="term" value="P:signal transduction"/>
    <property type="evidence" value="ECO:0000353"/>
    <property type="project" value="UniProtKB"/>
</dbReference>
<dbReference type="GO" id="GO:0006511">
    <property type="term" value="P:ubiquitin-dependent protein catabolic process"/>
    <property type="evidence" value="ECO:0000318"/>
    <property type="project" value="GO_Central"/>
</dbReference>
<dbReference type="CDD" id="cd04016">
    <property type="entry name" value="C2_Tollip"/>
    <property type="match status" value="1"/>
</dbReference>
<dbReference type="CDD" id="cd14363">
    <property type="entry name" value="CUE_TOLIP"/>
    <property type="match status" value="1"/>
</dbReference>
<dbReference type="FunFam" id="1.10.8.10:FF:000036">
    <property type="entry name" value="Toll-interacting protein-like Protein"/>
    <property type="match status" value="1"/>
</dbReference>
<dbReference type="FunFam" id="2.60.40.150:FF:000055">
    <property type="entry name" value="Toll-interacting protein-like Protein"/>
    <property type="match status" value="1"/>
</dbReference>
<dbReference type="Gene3D" id="2.60.40.150">
    <property type="entry name" value="C2 domain"/>
    <property type="match status" value="1"/>
</dbReference>
<dbReference type="Gene3D" id="1.10.8.10">
    <property type="entry name" value="DNA helicase RuvA subunit, C-terminal domain"/>
    <property type="match status" value="1"/>
</dbReference>
<dbReference type="InterPro" id="IPR000008">
    <property type="entry name" value="C2_dom"/>
</dbReference>
<dbReference type="InterPro" id="IPR035892">
    <property type="entry name" value="C2_domain_sf"/>
</dbReference>
<dbReference type="InterPro" id="IPR003892">
    <property type="entry name" value="CUE"/>
</dbReference>
<dbReference type="InterPro" id="IPR041799">
    <property type="entry name" value="TOLIP_CUE"/>
</dbReference>
<dbReference type="InterPro" id="IPR037301">
    <property type="entry name" value="Tollip_C2"/>
</dbReference>
<dbReference type="InterPro" id="IPR009060">
    <property type="entry name" value="UBA-like_sf"/>
</dbReference>
<dbReference type="PANTHER" id="PTHR16461">
    <property type="entry name" value="TOLL-INTERACTING PROTEIN"/>
    <property type="match status" value="1"/>
</dbReference>
<dbReference type="PANTHER" id="PTHR16461:SF5">
    <property type="entry name" value="TOLL-INTERACTING PROTEIN"/>
    <property type="match status" value="1"/>
</dbReference>
<dbReference type="Pfam" id="PF00168">
    <property type="entry name" value="C2"/>
    <property type="match status" value="1"/>
</dbReference>
<dbReference type="Pfam" id="PF02845">
    <property type="entry name" value="CUE"/>
    <property type="match status" value="1"/>
</dbReference>
<dbReference type="SMART" id="SM00239">
    <property type="entry name" value="C2"/>
    <property type="match status" value="1"/>
</dbReference>
<dbReference type="SMART" id="SM00546">
    <property type="entry name" value="CUE"/>
    <property type="match status" value="1"/>
</dbReference>
<dbReference type="SUPFAM" id="SSF49562">
    <property type="entry name" value="C2 domain (Calcium/lipid-binding domain, CaLB)"/>
    <property type="match status" value="1"/>
</dbReference>
<dbReference type="SUPFAM" id="SSF46934">
    <property type="entry name" value="UBA-like"/>
    <property type="match status" value="1"/>
</dbReference>
<dbReference type="PROSITE" id="PS50004">
    <property type="entry name" value="C2"/>
    <property type="match status" value="1"/>
</dbReference>
<dbReference type="PROSITE" id="PS51140">
    <property type="entry name" value="CUE"/>
    <property type="match status" value="1"/>
</dbReference>
<accession>Q9H0E2</accession>
<accession>B3KXC6</accession>
<accession>Q9H9E6</accession>
<accession>Q9UJ69</accession>
<feature type="initiator methionine" description="Removed" evidence="15">
    <location>
        <position position="1"/>
    </location>
</feature>
<feature type="chain" id="PRO_0000072625" description="Toll-interacting protein">
    <location>
        <begin position="2"/>
        <end position="274"/>
    </location>
</feature>
<feature type="domain" description="C2" evidence="1">
    <location>
        <begin position="35"/>
        <end position="152"/>
    </location>
</feature>
<feature type="domain" description="CUE" evidence="2">
    <location>
        <begin position="229"/>
        <end position="272"/>
    </location>
</feature>
<feature type="short sequence motif" description="AIM1">
    <location>
        <begin position="133"/>
        <end position="136"/>
    </location>
</feature>
<feature type="short sequence motif" description="AIM2">
    <location>
        <begin position="151"/>
        <end position="154"/>
    </location>
</feature>
<feature type="modified residue" description="N-acetylalanine" evidence="15">
    <location>
        <position position="2"/>
    </location>
</feature>
<feature type="splice variant" id="VSP_056301" description="In isoform 2." evidence="13">
    <location>
        <begin position="1"/>
        <end position="69"/>
    </location>
</feature>
<feature type="sequence variant" id="VAR_079499" description="In dbSNP:rs1037270334." evidence="9">
    <original>D</original>
    <variation>N</variation>
    <location>
        <position position="161"/>
    </location>
</feature>
<feature type="sequence variant" id="VAR_034557" description="In dbSNP:rs5744015.">
    <original>A</original>
    <variation>S</variation>
    <location>
        <position position="222"/>
    </location>
</feature>
<feature type="mutagenesis site" description="Reduced interaction with TOM1; when associated with Ala-12." evidence="10">
    <original>R</original>
    <variation>A</variation>
    <location>
        <position position="9"/>
    </location>
</feature>
<feature type="mutagenesis site" description="Reduced interaction with TOM1; when associated with Ala-9." evidence="10">
    <original>V</original>
    <variation>A</variation>
    <location>
        <position position="12"/>
    </location>
</feature>
<feature type="mutagenesis site" description="Reduced interaction with TOM1; when associated with Ala-23." evidence="10">
    <original>D</original>
    <variation>A</variation>
    <location>
        <position position="20"/>
    </location>
</feature>
<feature type="mutagenesis site" description="Reduced interaction with TOM1." evidence="10">
    <original>F</original>
    <variation>A</variation>
    <location>
        <position position="21"/>
    </location>
</feature>
<feature type="mutagenesis site" description="Reduced interaction with TOM1; when associated with Ala-20." evidence="10">
    <original>R</original>
    <variation>A</variation>
    <location>
        <position position="23"/>
    </location>
</feature>
<feature type="sequence conflict" description="In Ref. 1; CAB58118." evidence="14" ref="1">
    <location>
        <position position="40"/>
    </location>
</feature>
<feature type="sequence conflict" description="In Ref. 3; BAB14283." evidence="14" ref="3">
    <original>K</original>
    <variation>E</variation>
    <location>
        <position position="150"/>
    </location>
</feature>
<feature type="strand" evidence="17">
    <location>
        <begin position="4"/>
        <end position="7"/>
    </location>
</feature>
<feature type="strand" evidence="17">
    <location>
        <begin position="10"/>
        <end position="13"/>
    </location>
</feature>
<feature type="helix" evidence="16">
    <location>
        <begin position="231"/>
        <end position="240"/>
    </location>
</feature>
<feature type="strand" evidence="16">
    <location>
        <begin position="242"/>
        <end position="244"/>
    </location>
</feature>
<feature type="helix" evidence="16">
    <location>
        <begin position="246"/>
        <end position="253"/>
    </location>
</feature>
<feature type="turn" evidence="16">
    <location>
        <begin position="254"/>
        <end position="258"/>
    </location>
</feature>
<feature type="helix" evidence="16">
    <location>
        <begin position="260"/>
        <end position="269"/>
    </location>
</feature>
<protein>
    <recommendedName>
        <fullName>Toll-interacting protein</fullName>
    </recommendedName>
</protein>
<organism>
    <name type="scientific">Homo sapiens</name>
    <name type="common">Human</name>
    <dbReference type="NCBI Taxonomy" id="9606"/>
    <lineage>
        <taxon>Eukaryota</taxon>
        <taxon>Metazoa</taxon>
        <taxon>Chordata</taxon>
        <taxon>Craniata</taxon>
        <taxon>Vertebrata</taxon>
        <taxon>Euteleostomi</taxon>
        <taxon>Mammalia</taxon>
        <taxon>Eutheria</taxon>
        <taxon>Euarchontoglires</taxon>
        <taxon>Primates</taxon>
        <taxon>Haplorrhini</taxon>
        <taxon>Catarrhini</taxon>
        <taxon>Hominidae</taxon>
        <taxon>Homo</taxon>
    </lineage>
</organism>
<reference key="1">
    <citation type="journal article" date="2000" name="Nat. Cell Biol.">
        <title>Tollip, a new component of the IL-1R1 pathway, links IRAK to the IL-1 receptor.</title>
        <authorList>
            <person name="Burns K."/>
            <person name="Clatworthy J."/>
            <person name="Martin L."/>
            <person name="Martinon F."/>
            <person name="Plumpton C."/>
            <person name="Maschera B."/>
            <person name="Lewis A."/>
            <person name="Ray K."/>
            <person name="Tschopp J."/>
            <person name="Volpe F."/>
        </authorList>
    </citation>
    <scope>NUCLEOTIDE SEQUENCE [MRNA] (ISOFORM 1)</scope>
    <scope>FUNCTION</scope>
    <scope>SUBUNIT</scope>
</reference>
<reference key="2">
    <citation type="journal article" date="2001" name="Genome Res.">
        <title>Towards a catalog of human genes and proteins: sequencing and analysis of 500 novel complete protein coding human cDNAs.</title>
        <authorList>
            <person name="Wiemann S."/>
            <person name="Weil B."/>
            <person name="Wellenreuther R."/>
            <person name="Gassenhuber J."/>
            <person name="Glassl S."/>
            <person name="Ansorge W."/>
            <person name="Boecher M."/>
            <person name="Bloecker H."/>
            <person name="Bauersachs S."/>
            <person name="Blum H."/>
            <person name="Lauber J."/>
            <person name="Duesterhoeft A."/>
            <person name="Beyer A."/>
            <person name="Koehrer K."/>
            <person name="Strack N."/>
            <person name="Mewes H.-W."/>
            <person name="Ottenwaelder B."/>
            <person name="Obermaier B."/>
            <person name="Tampe J."/>
            <person name="Heubner D."/>
            <person name="Wambutt R."/>
            <person name="Korn B."/>
            <person name="Klein M."/>
            <person name="Poustka A."/>
        </authorList>
    </citation>
    <scope>NUCLEOTIDE SEQUENCE [LARGE SCALE MRNA] (ISOFORM 1)</scope>
    <source>
        <tissue>Testis</tissue>
    </source>
</reference>
<reference key="3">
    <citation type="journal article" date="2004" name="Nat. Genet.">
        <title>Complete sequencing and characterization of 21,243 full-length human cDNAs.</title>
        <authorList>
            <person name="Ota T."/>
            <person name="Suzuki Y."/>
            <person name="Nishikawa T."/>
            <person name="Otsuki T."/>
            <person name="Sugiyama T."/>
            <person name="Irie R."/>
            <person name="Wakamatsu A."/>
            <person name="Hayashi K."/>
            <person name="Sato H."/>
            <person name="Nagai K."/>
            <person name="Kimura K."/>
            <person name="Makita H."/>
            <person name="Sekine M."/>
            <person name="Obayashi M."/>
            <person name="Nishi T."/>
            <person name="Shibahara T."/>
            <person name="Tanaka T."/>
            <person name="Ishii S."/>
            <person name="Yamamoto J."/>
            <person name="Saito K."/>
            <person name="Kawai Y."/>
            <person name="Isono Y."/>
            <person name="Nakamura Y."/>
            <person name="Nagahari K."/>
            <person name="Murakami K."/>
            <person name="Yasuda T."/>
            <person name="Iwayanagi T."/>
            <person name="Wagatsuma M."/>
            <person name="Shiratori A."/>
            <person name="Sudo H."/>
            <person name="Hosoiri T."/>
            <person name="Kaku Y."/>
            <person name="Kodaira H."/>
            <person name="Kondo H."/>
            <person name="Sugawara M."/>
            <person name="Takahashi M."/>
            <person name="Kanda K."/>
            <person name="Yokoi T."/>
            <person name="Furuya T."/>
            <person name="Kikkawa E."/>
            <person name="Omura Y."/>
            <person name="Abe K."/>
            <person name="Kamihara K."/>
            <person name="Katsuta N."/>
            <person name="Sato K."/>
            <person name="Tanikawa M."/>
            <person name="Yamazaki M."/>
            <person name="Ninomiya K."/>
            <person name="Ishibashi T."/>
            <person name="Yamashita H."/>
            <person name="Murakawa K."/>
            <person name="Fujimori K."/>
            <person name="Tanai H."/>
            <person name="Kimata M."/>
            <person name="Watanabe M."/>
            <person name="Hiraoka S."/>
            <person name="Chiba Y."/>
            <person name="Ishida S."/>
            <person name="Ono Y."/>
            <person name="Takiguchi S."/>
            <person name="Watanabe S."/>
            <person name="Yosida M."/>
            <person name="Hotuta T."/>
            <person name="Kusano J."/>
            <person name="Kanehori K."/>
            <person name="Takahashi-Fujii A."/>
            <person name="Hara H."/>
            <person name="Tanase T.-O."/>
            <person name="Nomura Y."/>
            <person name="Togiya S."/>
            <person name="Komai F."/>
            <person name="Hara R."/>
            <person name="Takeuchi K."/>
            <person name="Arita M."/>
            <person name="Imose N."/>
            <person name="Musashino K."/>
            <person name="Yuuki H."/>
            <person name="Oshima A."/>
            <person name="Sasaki N."/>
            <person name="Aotsuka S."/>
            <person name="Yoshikawa Y."/>
            <person name="Matsunawa H."/>
            <person name="Ichihara T."/>
            <person name="Shiohata N."/>
            <person name="Sano S."/>
            <person name="Moriya S."/>
            <person name="Momiyama H."/>
            <person name="Satoh N."/>
            <person name="Takami S."/>
            <person name="Terashima Y."/>
            <person name="Suzuki O."/>
            <person name="Nakagawa S."/>
            <person name="Senoh A."/>
            <person name="Mizoguchi H."/>
            <person name="Goto Y."/>
            <person name="Shimizu F."/>
            <person name="Wakebe H."/>
            <person name="Hishigaki H."/>
            <person name="Watanabe T."/>
            <person name="Sugiyama A."/>
            <person name="Takemoto M."/>
            <person name="Kawakami B."/>
            <person name="Yamazaki M."/>
            <person name="Watanabe K."/>
            <person name="Kumagai A."/>
            <person name="Itakura S."/>
            <person name="Fukuzumi Y."/>
            <person name="Fujimori Y."/>
            <person name="Komiyama M."/>
            <person name="Tashiro H."/>
            <person name="Tanigami A."/>
            <person name="Fujiwara T."/>
            <person name="Ono T."/>
            <person name="Yamada K."/>
            <person name="Fujii Y."/>
            <person name="Ozaki K."/>
            <person name="Hirao M."/>
            <person name="Ohmori Y."/>
            <person name="Kawabata A."/>
            <person name="Hikiji T."/>
            <person name="Kobatake N."/>
            <person name="Inagaki H."/>
            <person name="Ikema Y."/>
            <person name="Okamoto S."/>
            <person name="Okitani R."/>
            <person name="Kawakami T."/>
            <person name="Noguchi S."/>
            <person name="Itoh T."/>
            <person name="Shigeta K."/>
            <person name="Senba T."/>
            <person name="Matsumura K."/>
            <person name="Nakajima Y."/>
            <person name="Mizuno T."/>
            <person name="Morinaga M."/>
            <person name="Sasaki M."/>
            <person name="Togashi T."/>
            <person name="Oyama M."/>
            <person name="Hata H."/>
            <person name="Watanabe M."/>
            <person name="Komatsu T."/>
            <person name="Mizushima-Sugano J."/>
            <person name="Satoh T."/>
            <person name="Shirai Y."/>
            <person name="Takahashi Y."/>
            <person name="Nakagawa K."/>
            <person name="Okumura K."/>
            <person name="Nagase T."/>
            <person name="Nomura N."/>
            <person name="Kikuchi H."/>
            <person name="Masuho Y."/>
            <person name="Yamashita R."/>
            <person name="Nakai K."/>
            <person name="Yada T."/>
            <person name="Nakamura Y."/>
            <person name="Ohara O."/>
            <person name="Isogai T."/>
            <person name="Sugano S."/>
        </authorList>
    </citation>
    <scope>NUCLEOTIDE SEQUENCE [LARGE SCALE MRNA] (ISOFORM 2)</scope>
    <scope>NUCLEOTIDE SEQUENCE [LARGE SCALE MRNA] OF 34-274 (ISOFORM 1)</scope>
</reference>
<reference key="4">
    <citation type="journal article" date="2006" name="Nature">
        <title>Human chromosome 11 DNA sequence and analysis including novel gene identification.</title>
        <authorList>
            <person name="Taylor T.D."/>
            <person name="Noguchi H."/>
            <person name="Totoki Y."/>
            <person name="Toyoda A."/>
            <person name="Kuroki Y."/>
            <person name="Dewar K."/>
            <person name="Lloyd C."/>
            <person name="Itoh T."/>
            <person name="Takeda T."/>
            <person name="Kim D.-W."/>
            <person name="She X."/>
            <person name="Barlow K.F."/>
            <person name="Bloom T."/>
            <person name="Bruford E."/>
            <person name="Chang J.L."/>
            <person name="Cuomo C.A."/>
            <person name="Eichler E."/>
            <person name="FitzGerald M.G."/>
            <person name="Jaffe D.B."/>
            <person name="LaButti K."/>
            <person name="Nicol R."/>
            <person name="Park H.-S."/>
            <person name="Seaman C."/>
            <person name="Sougnez C."/>
            <person name="Yang X."/>
            <person name="Zimmer A.R."/>
            <person name="Zody M.C."/>
            <person name="Birren B.W."/>
            <person name="Nusbaum C."/>
            <person name="Fujiyama A."/>
            <person name="Hattori M."/>
            <person name="Rogers J."/>
            <person name="Lander E.S."/>
            <person name="Sakaki Y."/>
        </authorList>
    </citation>
    <scope>NUCLEOTIDE SEQUENCE [LARGE SCALE GENOMIC DNA]</scope>
</reference>
<reference key="5">
    <citation type="journal article" date="2004" name="Genome Res.">
        <title>The status, quality, and expansion of the NIH full-length cDNA project: the Mammalian Gene Collection (MGC).</title>
        <authorList>
            <consortium name="The MGC Project Team"/>
        </authorList>
    </citation>
    <scope>NUCLEOTIDE SEQUENCE [LARGE SCALE MRNA] (ISOFORM 1)</scope>
    <source>
        <tissue>Eye</tissue>
        <tissue>Placenta</tissue>
    </source>
</reference>
<reference key="6">
    <citation type="journal article" date="2002" name="J. Biol. Chem.">
        <title>Negative regulation of Toll-like receptor-mediated signaling by Tollip.</title>
        <authorList>
            <person name="Zhang G."/>
            <person name="Ghosh S."/>
        </authorList>
    </citation>
    <scope>FUNCTION</scope>
    <scope>SUBUNIT</scope>
    <scope>INTERACTION WITH TLR2 AND TLR4</scope>
</reference>
<reference key="7">
    <citation type="journal article" date="2003" name="J. Biol. Chem.">
        <title>Tom1, a VHS domain-containing protein, interacts with tollip, ubiquitin, and clathrin.</title>
        <authorList>
            <person name="Yamakami M."/>
            <person name="Yoshimori T."/>
            <person name="Yokosawa H."/>
        </authorList>
    </citation>
    <scope>INTERACTION WITH TOM1 AND UBIQUITIN</scope>
</reference>
<reference key="8">
    <citation type="journal article" date="2006" name="Biochem. Biophys. Res. Commun.">
        <title>Recruitment of clathrin onto endosomes by the Tom1-Tollip complex.</title>
        <authorList>
            <person name="Katoh Y."/>
            <person name="Imakagura H."/>
            <person name="Futatsumori M."/>
            <person name="Nakayama K."/>
        </authorList>
    </citation>
    <scope>INTERACTION WITH TOM1L2</scope>
</reference>
<reference key="9">
    <citation type="journal article" date="2004" name="J. Biol. Chem.">
        <title>Tollip and Tom1 form a complex and recruit ubiquitin-conjugated proteins onto early endosomes.</title>
        <authorList>
            <person name="Katoh Y."/>
            <person name="Shiba Y."/>
            <person name="Mitsuhashi H."/>
            <person name="Yanagida Y."/>
            <person name="Takatsu H."/>
            <person name="Nakayama K."/>
        </authorList>
    </citation>
    <scope>FUNCTION</scope>
    <scope>IDENTIFICATION IN A COMPLEX WITH TOM1</scope>
    <scope>INTERACTION WITH TOM1</scope>
    <scope>SUBCELLULAR LOCATION</scope>
</reference>
<reference key="10">
    <citation type="journal article" date="2011" name="BMC Syst. Biol.">
        <title>Initial characterization of the human central proteome.</title>
        <authorList>
            <person name="Burkard T.R."/>
            <person name="Planyavsky M."/>
            <person name="Kaupe I."/>
            <person name="Breitwieser F.P."/>
            <person name="Buerckstuemmer T."/>
            <person name="Bennett K.L."/>
            <person name="Superti-Furga G."/>
            <person name="Colinge J."/>
        </authorList>
    </citation>
    <scope>IDENTIFICATION BY MASS SPECTROMETRY [LARGE SCALE ANALYSIS]</scope>
</reference>
<reference key="11">
    <citation type="journal article" date="2012" name="Proc. Natl. Acad. Sci. U.S.A.">
        <title>N-terminal acetylome analyses and functional insights of the N-terminal acetyltransferase NatB.</title>
        <authorList>
            <person name="Van Damme P."/>
            <person name="Lasa M."/>
            <person name="Polevoda B."/>
            <person name="Gazquez C."/>
            <person name="Elosegui-Artola A."/>
            <person name="Kim D.S."/>
            <person name="De Juan-Pardo E."/>
            <person name="Demeyer K."/>
            <person name="Hole K."/>
            <person name="Larrea E."/>
            <person name="Timmerman E."/>
            <person name="Prieto J."/>
            <person name="Arnesen T."/>
            <person name="Sherman F."/>
            <person name="Gevaert K."/>
            <person name="Aldabe R."/>
        </authorList>
    </citation>
    <scope>ACETYLATION [LARGE SCALE ANALYSIS] AT ALA-2</scope>
    <scope>CLEAVAGE OF INITIATOR METHIONINE [LARGE SCALE ANALYSIS]</scope>
    <scope>IDENTIFICATION BY MASS SPECTROMETRY [LARGE SCALE ANALYSIS]</scope>
</reference>
<reference key="12">
    <citation type="journal article" date="2014" name="Cell">
        <title>Autophagic clearance of PolyQ proteins mediated by ubiquitin-Atg8 adaptors of the conserved CUET protein family.</title>
        <authorList>
            <person name="Lu K."/>
            <person name="Psakhye I."/>
            <person name="Jentsch S."/>
        </authorList>
    </citation>
    <scope>INTERACTION WITH ATG8 FAMILY PROTEINS AND UBIQUITIN</scope>
    <scope>DOMAIN</scope>
    <scope>FUNCTION</scope>
</reference>
<reference key="13">
    <citation type="journal article" date="2015" name="Proteomics">
        <title>N-terminome analysis of the human mitochondrial proteome.</title>
        <authorList>
            <person name="Vaca Jacome A.S."/>
            <person name="Rabilloud T."/>
            <person name="Schaeffer-Reiss C."/>
            <person name="Rompais M."/>
            <person name="Ayoub D."/>
            <person name="Lane L."/>
            <person name="Bairoch A."/>
            <person name="Van Dorsselaer A."/>
            <person name="Carapito C."/>
        </authorList>
    </citation>
    <scope>IDENTIFICATION BY MASS SPECTROMETRY [LARGE SCALE ANALYSIS]</scope>
</reference>
<reference key="14">
    <citation type="journal article" date="2015" name="Structure">
        <title>Tom1 Modulates Binding of Tollip to Phosphatidylinositol 3-Phosphate via a Coupled Folding and Binding Mechanism.</title>
        <authorList>
            <person name="Xiao S."/>
            <person name="Brannon M.K."/>
            <person name="Zhao X."/>
            <person name="Fread K.I."/>
            <person name="Ellena J.F."/>
            <person name="Bushweller J.H."/>
            <person name="Finkielstein C.V."/>
            <person name="Armstrong G.S."/>
            <person name="Capelluto D.G.S."/>
        </authorList>
    </citation>
    <scope>FUNCTION</scope>
    <scope>INTERACTION WITH TOM1</scope>
    <scope>SUBCELLULAR LOCATION</scope>
    <scope>DOMAIN</scope>
    <scope>MUTAGENESIS OF ARG-9; VAL-12; ASP-20; PHE-21 AND ARG-23</scope>
</reference>
<reference key="15">
    <citation type="journal article" date="2019" name="NPJ Genom. Med.">
        <title>Dominant TOM1 mutation associated with combined immunodeficiency and autoimmune disease.</title>
        <authorList>
            <person name="Keskitalo S."/>
            <person name="Haapaniemi E.M."/>
            <person name="Glumoff V."/>
            <person name="Liu X."/>
            <person name="Lehtinen V."/>
            <person name="Fogarty C."/>
            <person name="Rajala H."/>
            <person name="Chiang S.C."/>
            <person name="Mustjoki S."/>
            <person name="Kovanen P."/>
            <person name="Lohi J."/>
            <person name="Bryceson Y.T."/>
            <person name="Seppaenen M."/>
            <person name="Kere J."/>
            <person name="Heiskanen K."/>
            <person name="Varjosalo M."/>
        </authorList>
    </citation>
    <scope>INTERACTION WITH TOM1 AND LRBA</scope>
    <scope>SUBCELLULAR LOCATION</scope>
</reference>
<reference key="16">
    <citation type="submission" date="2004-11" db="PDB data bank">
        <title>Solution structure of CUE domain in the C-terminal of human Toll-interacting protein (TOLLIP).</title>
        <authorList>
            <consortium name="RIKEN structural genomics initiative (RSGI)"/>
        </authorList>
    </citation>
    <scope>STRUCTURE BY NMR OF 229-274</scope>
</reference>
<reference key="17">
    <citation type="journal article" date="2015" name="Orphanet J. Rare Dis.">
        <title>EPS8L2 is a new causal gene for childhood onset autosomal recessive progressive hearing loss.</title>
        <authorList>
            <person name="Dahmani M."/>
            <person name="Ammar-Khodja F."/>
            <person name="Bonnet C."/>
            <person name="Lefevre G.M."/>
            <person name="Hardelin J.P."/>
            <person name="Ibrahim H."/>
            <person name="Mallek Z."/>
            <person name="Petit C."/>
        </authorList>
    </citation>
    <scope>VARIANT ASN-161</scope>
</reference>
<reference key="18">
    <citation type="journal article" date="2023" name="J. Biol. Chem.">
        <title>TBK1-stabilized ZNF268a recruits SETD4 to methylate TBK1 for efficient interferon signaling.</title>
        <authorList>
            <person name="Liu Y."/>
            <person name="Yin W."/>
            <person name="Zeng X."/>
            <person name="Fan J."/>
            <person name="Liu C."/>
            <person name="Gao M."/>
            <person name="Huang Z."/>
            <person name="Sun G."/>
            <person name="Guo M."/>
        </authorList>
    </citation>
    <scope>INTERACTION WITH ZNF268</scope>
</reference>
<sequence length="274" mass="30282">MATTVSTQRGPVYIGELPQDFLRITPTQQQRQVQLDAQAAQQLQYGGAVGTVGRLNITVVQAKLAKNYGMTRMDPYCRLRLGYAVYETPTAHNGAKNPRWNKVIHCTVPPGVDSFYLEIFDERAFSMDDRIAWTHITIPESLRQGKVEDKWYSLSGRQGDDKEGMINLVMSYALLPAAMVMPPQPVVLMPTVYQQGVGYVPITGMPAVCSPGMVPVALPPAAVNAQPRCSEEDLKAIQDMFPNMDQEVIRSVLEAQRGNKDAAINSLLQMGEEP</sequence>
<gene>
    <name type="primary">TOLLIP</name>
</gene>
<proteinExistence type="evidence at protein level"/>
<comment type="function">
    <text evidence="3 4 6 8 10">Component of the signaling pathway of IL-1 and Toll-like receptors (PubMed:10854325, PubMed:11751856). Inhibits cell activation by microbial products. Recruits IRAK1 to the IL-1 receptor complex (PubMed:10854325). Inhibits IRAK1 phosphorylation and kinase activity (PubMed:11751856). Connects the ubiquitin pathway to autophagy by functioning as a ubiquitin-ATG8 family adapter and thus mediating autophagic clearance of ubiquitin conjugates (PubMed:25042851). The TOLLIP-dependent selective autophagy pathway plays an important role in clearance of cytotoxic polyQ proteins aggregates (PubMed:25042851). In a complex with TOM1, recruits ubiquitin-conjugated proteins onto early endosomes (PubMed:15047686). Binds to phosphatidylinositol 3-phosphate (PtdIns(3)P) (PubMed:26320582).</text>
</comment>
<comment type="subunit">
    <text evidence="3 4 5 6 7 8 10 11 12">Oligomerizes (PubMed:11751856). Interacts (via C-terminus) with TLR2 and the TLR4-MD2 complex (PubMed:11751856). Exists as complex with IRAK1 in unstimulated cells (PubMed:10854325). Upon IL-1 signaling, binds to the activated IL-1 receptor complex containing IL-1RI, IL-1RacP and the adapter protein MyD88, where it interacts with the TIR domain of IL-1RacP (PubMed:10854325). MyD88 then triggers IRAK1 autophosphorylation, which in turn leads to the dissociation of IRAK1 from TOLLIP and IL-1RAcP (PubMed:10854325). Found in a complex with TOM1; interacts (via N-terminus) with TOM1 (via GAT domain); the interactions leads to TOM1-recruitment to endosomes and inhibition of TOLLIP binding to PtdIns(3)P (PubMed:14563850, PubMed:15047686, PubMed:26320582, PubMed:31263572). Interacts with TOM1L2 (PubMed:16412388). Interacts with ATG8 family proteins (via AIM motifs) (PubMed:25042851). Interacts (via CUE domain) with ubiquitin (PubMed:14563850, PubMed:25042851). Interacts with LRBA (PubMed:31263572). Interacts with ZNF268; this interaction leads to degradation by Tollip-mediated selective autophagy system (PubMed:37926288).</text>
</comment>
<comment type="interaction">
    <interactant intactId="EBI-74615">
        <id>Q9H0E2</id>
    </interactant>
    <interactant intactId="EBI-11976299">
        <id>Q5BKX5-3</id>
        <label>ACTMAP</label>
    </interactant>
    <organismsDiffer>false</organismsDiffer>
    <experiments>3</experiments>
</comment>
<comment type="interaction">
    <interactant intactId="EBI-74615">
        <id>Q9H0E2</id>
    </interactant>
    <interactant intactId="EBI-77797">
        <id>P35609</id>
        <label>ACTN2</label>
    </interactant>
    <organismsDiffer>false</organismsDiffer>
    <experiments>3</experiments>
</comment>
<comment type="interaction">
    <interactant intactId="EBI-74615">
        <id>Q9H0E2</id>
    </interactant>
    <interactant intactId="EBI-2875665">
        <id>Q96B67</id>
        <label>ARRDC3</label>
    </interactant>
    <organismsDiffer>false</organismsDiffer>
    <experiments>3</experiments>
</comment>
<comment type="interaction">
    <interactant intactId="EBI-74615">
        <id>Q9H0E2</id>
    </interactant>
    <interactant intactId="EBI-930964">
        <id>P54253</id>
        <label>ATXN1</label>
    </interactant>
    <organismsDiffer>false</organismsDiffer>
    <experiments>7</experiments>
</comment>
<comment type="interaction">
    <interactant intactId="EBI-74615">
        <id>Q9H0E2</id>
    </interactant>
    <interactant intactId="EBI-2876678">
        <id>Q9H305</id>
        <label>CDIP1</label>
    </interactant>
    <organismsDiffer>false</organismsDiffer>
    <experiments>3</experiments>
</comment>
<comment type="interaction">
    <interactant intactId="EBI-74615">
        <id>Q9H0E2</id>
    </interactant>
    <interactant intactId="EBI-12160437">
        <id>A8MTA8-2</id>
        <label>CIMIP2B</label>
    </interactant>
    <organismsDiffer>false</organismsDiffer>
    <experiments>3</experiments>
</comment>
<comment type="interaction">
    <interactant intactId="EBI-74615">
        <id>Q9H0E2</id>
    </interactant>
    <interactant intactId="EBI-1789619">
        <id>Q05048</id>
        <label>CSTF1</label>
    </interactant>
    <organismsDiffer>false</organismsDiffer>
    <experiments>5</experiments>
</comment>
<comment type="interaction">
    <interactant intactId="EBI-74615">
        <id>Q9H0E2</id>
    </interactant>
    <interactant intactId="EBI-7875264">
        <id>O75553</id>
        <label>DAB1</label>
    </interactant>
    <organismsDiffer>false</organismsDiffer>
    <experiments>3</experiments>
</comment>
<comment type="interaction">
    <interactant intactId="EBI-74615">
        <id>Q9H0E2</id>
    </interactant>
    <interactant intactId="EBI-724310">
        <id>Q15038</id>
        <label>DAZAP2</label>
    </interactant>
    <organismsDiffer>false</organismsDiffer>
    <experiments>11</experiments>
</comment>
<comment type="interaction">
    <interactant intactId="EBI-74615">
        <id>Q9H0E2</id>
    </interactant>
    <interactant intactId="EBI-10303987">
        <id>Q9UHG0</id>
        <label>DCDC2</label>
    </interactant>
    <organismsDiffer>false</organismsDiffer>
    <experiments>3</experiments>
</comment>
<comment type="interaction">
    <interactant intactId="EBI-74615">
        <id>Q9H0E2</id>
    </interactant>
    <interactant intactId="EBI-25840379">
        <id>Q14203-5</id>
        <label>DCTN1</label>
    </interactant>
    <organismsDiffer>false</organismsDiffer>
    <experiments>3</experiments>
</comment>
<comment type="interaction">
    <interactant intactId="EBI-74615">
        <id>Q9H0E2</id>
    </interactant>
    <interactant intactId="EBI-742054">
        <id>Q96D03</id>
        <label>DDIT4L</label>
    </interactant>
    <organismsDiffer>false</organismsDiffer>
    <experiments>3</experiments>
</comment>
<comment type="interaction">
    <interactant intactId="EBI-74615">
        <id>Q9H0E2</id>
    </interactant>
    <interactant intactId="EBI-948630">
        <id>Q86Y13</id>
        <label>DZIP3</label>
    </interactant>
    <organismsDiffer>false</organismsDiffer>
    <experiments>2</experiments>
</comment>
<comment type="interaction">
    <interactant intactId="EBI-74615">
        <id>Q9H0E2</id>
    </interactant>
    <interactant intactId="EBI-640775">
        <id>P19525</id>
        <label>EIF2AK2</label>
    </interactant>
    <organismsDiffer>false</organismsDiffer>
    <experiments>2</experiments>
</comment>
<comment type="interaction">
    <interactant intactId="EBI-74615">
        <id>Q9H0E2</id>
    </interactant>
    <interactant intactId="EBI-11978259">
        <id>Q92567-2</id>
        <label>FAM168A</label>
    </interactant>
    <organismsDiffer>false</organismsDiffer>
    <experiments>3</experiments>
</comment>
<comment type="interaction">
    <interactant intactId="EBI-74615">
        <id>Q9H0E2</id>
    </interactant>
    <interactant intactId="EBI-11978177">
        <id>Q96NT3-2</id>
        <label>GUCD1</label>
    </interactant>
    <organismsDiffer>false</organismsDiffer>
    <experiments>3</experiments>
</comment>
<comment type="interaction">
    <interactant intactId="EBI-74615">
        <id>Q9H0E2</id>
    </interactant>
    <interactant intactId="EBI-447733">
        <id>O43187</id>
        <label>IRAK2</label>
    </interactant>
    <organismsDiffer>false</organismsDiffer>
    <experiments>2</experiments>
</comment>
<comment type="interaction">
    <interactant intactId="EBI-74615">
        <id>Q9H0E2</id>
    </interactant>
    <interactant intactId="EBI-10241252">
        <id>Q3SY46</id>
        <label>KRTAP13-3</label>
    </interactant>
    <organismsDiffer>false</organismsDiffer>
    <experiments>5</experiments>
</comment>
<comment type="interaction">
    <interactant intactId="EBI-74615">
        <id>Q9H0E2</id>
    </interactant>
    <interactant intactId="EBI-11992140">
        <id>Q3LI76</id>
        <label>KRTAP15-1</label>
    </interactant>
    <organismsDiffer>false</organismsDiffer>
    <experiments>3</experiments>
</comment>
<comment type="interaction">
    <interactant intactId="EBI-74615">
        <id>Q9H0E2</id>
    </interactant>
    <interactant intactId="EBI-10241353">
        <id>Q3SYF9</id>
        <label>KRTAP19-7</label>
    </interactant>
    <organismsDiffer>false</organismsDiffer>
    <experiments>3</experiments>
</comment>
<comment type="interaction">
    <interactant intactId="EBI-74615">
        <id>Q9H0E2</id>
    </interactant>
    <interactant intactId="EBI-12111050">
        <id>Q3LI64</id>
        <label>KRTAP6-1</label>
    </interactant>
    <organismsDiffer>false</organismsDiffer>
    <experiments>5</experiments>
</comment>
<comment type="interaction">
    <interactant intactId="EBI-74615">
        <id>Q9H0E2</id>
    </interactant>
    <interactant intactId="EBI-11962084">
        <id>Q3LI66</id>
        <label>KRTAP6-2</label>
    </interactant>
    <organismsDiffer>false</organismsDiffer>
    <experiments>5</experiments>
</comment>
<comment type="interaction">
    <interactant intactId="EBI-74615">
        <id>Q9H0E2</id>
    </interactant>
    <interactant intactId="EBI-18394498">
        <id>Q8IUC3</id>
        <label>KRTAP7-1</label>
    </interactant>
    <organismsDiffer>false</organismsDiffer>
    <experiments>3</experiments>
</comment>
<comment type="interaction">
    <interactant intactId="EBI-74615">
        <id>Q9H0E2</id>
    </interactant>
    <interactant intactId="EBI-720768">
        <id>Q9H492</id>
        <label>MAP1LC3A</label>
    </interactant>
    <organismsDiffer>false</organismsDiffer>
    <experiments>3</experiments>
</comment>
<comment type="interaction">
    <interactant intactId="EBI-74615">
        <id>Q9H0E2</id>
    </interactant>
    <interactant intactId="EBI-1050881">
        <id>Q5VYS4</id>
        <label>MEDAG</label>
    </interactant>
    <organismsDiffer>false</organismsDiffer>
    <experiments>3</experiments>
</comment>
<comment type="interaction">
    <interactant intactId="EBI-74615">
        <id>Q9H0E2</id>
    </interactant>
    <interactant intactId="EBI-11599933">
        <id>Q4VC12</id>
        <label>MSS51</label>
    </interactant>
    <organismsDiffer>false</organismsDiffer>
    <experiments>3</experiments>
</comment>
<comment type="interaction">
    <interactant intactId="EBI-74615">
        <id>Q9H0E2</id>
    </interactant>
    <interactant intactId="EBI-6447480">
        <id>P35548</id>
        <label>MSX2</label>
    </interactant>
    <organismsDiffer>false</organismsDiffer>
    <experiments>3</experiments>
</comment>
<comment type="interaction">
    <interactant intactId="EBI-74615">
        <id>Q9H0E2</id>
    </interactant>
    <interactant intactId="EBI-2816254">
        <id>Q14764</id>
        <label>MVP</label>
    </interactant>
    <organismsDiffer>false</organismsDiffer>
    <experiments>3</experiments>
</comment>
<comment type="interaction">
    <interactant intactId="EBI-74615">
        <id>Q9H0E2</id>
    </interactant>
    <interactant intactId="EBI-11742836">
        <id>Q16656-4</id>
        <label>NRF1</label>
    </interactant>
    <organismsDiffer>false</organismsDiffer>
    <experiments>3</experiments>
</comment>
<comment type="interaction">
    <interactant intactId="EBI-74615">
        <id>Q9H0E2</id>
    </interactant>
    <interactant intactId="EBI-741158">
        <id>Q96HA8</id>
        <label>NTAQ1</label>
    </interactant>
    <organismsDiffer>false</organismsDiffer>
    <experiments>4</experiments>
</comment>
<comment type="interaction">
    <interactant intactId="EBI-74615">
        <id>Q9H0E2</id>
    </interactant>
    <interactant intactId="EBI-2858265">
        <id>Q86TG7</id>
        <label>PEG10</label>
    </interactant>
    <organismsDiffer>false</organismsDiffer>
    <experiments>2</experiments>
</comment>
<comment type="interaction">
    <interactant intactId="EBI-74615">
        <id>Q9H0E2</id>
    </interactant>
    <interactant intactId="EBI-946080">
        <id>Q9BSU1</id>
        <label>PHAF1</label>
    </interactant>
    <organismsDiffer>false</organismsDiffer>
    <experiments>5</experiments>
</comment>
<comment type="interaction">
    <interactant intactId="EBI-74615">
        <id>Q9H0E2</id>
    </interactant>
    <interactant intactId="EBI-21251460">
        <id>O60260-5</id>
        <label>PRKN</label>
    </interactant>
    <organismsDiffer>false</organismsDiffer>
    <experiments>3</experiments>
</comment>
<comment type="interaction">
    <interactant intactId="EBI-74615">
        <id>Q9H0E2</id>
    </interactant>
    <interactant intactId="EBI-2803203">
        <id>Q86UA1</id>
        <label>PRPF39</label>
    </interactant>
    <organismsDiffer>false</organismsDiffer>
    <experiments>3</experiments>
</comment>
<comment type="interaction">
    <interactant intactId="EBI-74615">
        <id>Q9H0E2</id>
    </interactant>
    <interactant intactId="EBI-12754095">
        <id>P86480</id>
        <label>PRR20D</label>
    </interactant>
    <organismsDiffer>false</organismsDiffer>
    <experiments>3</experiments>
</comment>
<comment type="interaction">
    <interactant intactId="EBI-74615">
        <id>Q9H0E2</id>
    </interactant>
    <interactant intactId="EBI-372273">
        <id>P20618</id>
        <label>PSMB1</label>
    </interactant>
    <organismsDiffer>false</organismsDiffer>
    <experiments>3</experiments>
</comment>
<comment type="interaction">
    <interactant intactId="EBI-74615">
        <id>Q9H0E2</id>
    </interactant>
    <interactant intactId="EBI-12123390">
        <id>Q9NWB1-5</id>
        <label>RBFOX1</label>
    </interactant>
    <organismsDiffer>false</organismsDiffer>
    <experiments>3</experiments>
</comment>
<comment type="interaction">
    <interactant intactId="EBI-74615">
        <id>Q9H0E2</id>
    </interactant>
    <interactant intactId="EBI-740322">
        <id>Q93062</id>
        <label>RBPMS</label>
    </interactant>
    <organismsDiffer>false</organismsDiffer>
    <experiments>4</experiments>
</comment>
<comment type="interaction">
    <interactant intactId="EBI-74615">
        <id>Q9H0E2</id>
    </interactant>
    <interactant intactId="EBI-372094">
        <id>Q9BQY4</id>
        <label>RHOXF2</label>
    </interactant>
    <organismsDiffer>false</organismsDiffer>
    <experiments>6</experiments>
</comment>
<comment type="interaction">
    <interactant intactId="EBI-74615">
        <id>Q9H0E2</id>
    </interactant>
    <interactant intactId="EBI-396669">
        <id>Q9Y3C5</id>
        <label>RNF11</label>
    </interactant>
    <organismsDiffer>false</organismsDiffer>
    <experiments>3</experiments>
</comment>
<comment type="interaction">
    <interactant intactId="EBI-74615">
        <id>Q9H0E2</id>
    </interactant>
    <interactant intactId="EBI-985879">
        <id>P37840</id>
        <label>SNCA</label>
    </interactant>
    <organismsDiffer>false</organismsDiffer>
    <experiments>3</experiments>
</comment>
<comment type="interaction">
    <interactant intactId="EBI-74615">
        <id>Q9H0E2</id>
    </interactant>
    <interactant intactId="EBI-746930">
        <id>Q9H668</id>
        <label>STN1</label>
    </interactant>
    <organismsDiffer>false</organismsDiffer>
    <experiments>3</experiments>
</comment>
<comment type="interaction">
    <interactant intactId="EBI-74615">
        <id>Q9H0E2</id>
    </interactant>
    <interactant intactId="EBI-74634">
        <id>O60784</id>
        <label>TOM1</label>
    </interactant>
    <organismsDiffer>false</organismsDiffer>
    <experiments>8</experiments>
</comment>
<comment type="interaction">
    <interactant intactId="EBI-74615">
        <id>Q9H0E2</id>
    </interactant>
    <interactant intactId="EBI-12117154">
        <id>O60784-2</id>
        <label>TOM1</label>
    </interactant>
    <organismsDiffer>false</organismsDiffer>
    <experiments>5</experiments>
</comment>
<comment type="interaction">
    <interactant intactId="EBI-74615">
        <id>Q9H0E2</id>
    </interactant>
    <interactant intactId="EBI-712991">
        <id>O75674</id>
        <label>TOM1L1</label>
    </interactant>
    <organismsDiffer>false</organismsDiffer>
    <experiments>6</experiments>
</comment>
<comment type="interaction">
    <interactant intactId="EBI-74615">
        <id>Q9H0E2</id>
    </interactant>
    <interactant intactId="EBI-12011552">
        <id>O75674-2</id>
        <label>TOM1L1</label>
    </interactant>
    <organismsDiffer>false</organismsDiffer>
    <experiments>5</experiments>
</comment>
<comment type="interaction">
    <interactant intactId="EBI-74615">
        <id>Q9H0E2</id>
    </interactant>
    <interactant intactId="EBI-3452240">
        <id>Q6ZVM7</id>
        <label>TOM1L2</label>
    </interactant>
    <organismsDiffer>false</organismsDiffer>
    <experiments>4</experiments>
</comment>
<comment type="interaction">
    <interactant intactId="EBI-74615">
        <id>Q9H0E2</id>
    </interactant>
    <interactant intactId="EBI-12147805">
        <id>Q6ZVM7-2</id>
        <label>TOM1L2</label>
    </interactant>
    <organismsDiffer>false</organismsDiffer>
    <experiments>7</experiments>
</comment>
<comment type="interaction">
    <interactant intactId="EBI-74615">
        <id>Q9H0E2</id>
    </interactant>
    <interactant intactId="EBI-2851213">
        <id>Q8N5M4</id>
        <label>TTC9C</label>
    </interactant>
    <organismsDiffer>false</organismsDiffer>
    <experiments>3</experiments>
</comment>
<comment type="interaction">
    <interactant intactId="EBI-74615">
        <id>Q9H0E2</id>
    </interactant>
    <interactant intactId="EBI-11975223">
        <id>Q70EL1-9</id>
        <label>USP54</label>
    </interactant>
    <organismsDiffer>false</organismsDiffer>
    <experiments>3</experiments>
</comment>
<comment type="interaction">
    <interactant intactId="EBI-74615">
        <id>Q9H0E2</id>
    </interactant>
    <interactant intactId="EBI-2513471">
        <id>Q96S55</id>
        <label>WRNIP1</label>
    </interactant>
    <organismsDiffer>false</organismsDiffer>
    <experiments>2</experiments>
</comment>
<comment type="interaction">
    <interactant intactId="EBI-74615">
        <id>Q9H0E2</id>
    </interactant>
    <interactant intactId="EBI-746595">
        <id>Q96E35</id>
        <label>ZMYND19</label>
    </interactant>
    <organismsDiffer>false</organismsDiffer>
    <experiments>3</experiments>
</comment>
<comment type="interaction">
    <interactant intactId="EBI-74615">
        <id>Q9H0E2</id>
    </interactant>
    <interactant intactId="EBI-527853">
        <id>Q9UGI0</id>
        <label>ZRANB1</label>
    </interactant>
    <organismsDiffer>false</organismsDiffer>
    <experiments>3</experiments>
</comment>
<comment type="interaction">
    <interactant intactId="EBI-16173683">
        <id>Q9H0E2-1</id>
    </interactant>
    <interactant intactId="EBI-74634">
        <id>O60784</id>
        <label>TOM1</label>
    </interactant>
    <organismsDiffer>false</organismsDiffer>
    <experiments>4</experiments>
</comment>
<comment type="subcellular location">
    <subcellularLocation>
        <location evidence="11">Cytoplasm</location>
    </subcellularLocation>
    <subcellularLocation>
        <location evidence="6 11">Endosome</location>
    </subcellularLocation>
    <subcellularLocation>
        <location evidence="6 10">Early endosome</location>
    </subcellularLocation>
    <text evidence="11">Localized to endo/exosomal vesicles.</text>
</comment>
<comment type="alternative products">
    <event type="alternative splicing"/>
    <isoform>
        <id>Q9H0E2-1</id>
        <name>1</name>
        <sequence type="displayed"/>
    </isoform>
    <isoform>
        <id>Q9H0E2-2</id>
        <name>2</name>
        <sequence type="described" ref="VSP_056301"/>
    </isoform>
</comment>
<comment type="domain">
    <text evidence="8">Both ATG8-interaction motifs (AIM1 and AIM2) are required for the association with ATG8 family proteins.</text>
</comment>
<comment type="domain">
    <text evidence="10">The N-terminal TOM1-binding domain (residues 1-53) is a disordered domain that partially folds when bound to the GAT domain of TOM1.</text>
</comment>
<comment type="PTM">
    <text>Phosphorylated by IRAK1 upon stimulation by IL-1 or microbial products.</text>
</comment>
<comment type="similarity">
    <text evidence="14">Belongs to the tollip family.</text>
</comment>
<comment type="sequence caution" evidence="14">
    <conflict type="erroneous initiation">
        <sequence resource="EMBL-CDS" id="BAB14283"/>
    </conflict>
    <text>Truncated N-terminus.</text>
</comment>
<keyword id="KW-0002">3D-structure</keyword>
<keyword id="KW-0007">Acetylation</keyword>
<keyword id="KW-0025">Alternative splicing</keyword>
<keyword id="KW-0072">Autophagy</keyword>
<keyword id="KW-0963">Cytoplasm</keyword>
<keyword id="KW-0967">Endosome</keyword>
<keyword id="KW-0391">Immunity</keyword>
<keyword id="KW-0395">Inflammatory response</keyword>
<keyword id="KW-0399">Innate immunity</keyword>
<keyword id="KW-0597">Phosphoprotein</keyword>
<keyword id="KW-1267">Proteomics identification</keyword>
<keyword id="KW-1185">Reference proteome</keyword>
<keyword id="KW-0677">Repeat</keyword>
<evidence type="ECO:0000255" key="1">
    <source>
        <dbReference type="PROSITE-ProRule" id="PRU00041"/>
    </source>
</evidence>
<evidence type="ECO:0000255" key="2">
    <source>
        <dbReference type="PROSITE-ProRule" id="PRU00468"/>
    </source>
</evidence>
<evidence type="ECO:0000269" key="3">
    <source>
    </source>
</evidence>
<evidence type="ECO:0000269" key="4">
    <source>
    </source>
</evidence>
<evidence type="ECO:0000269" key="5">
    <source>
    </source>
</evidence>
<evidence type="ECO:0000269" key="6">
    <source>
    </source>
</evidence>
<evidence type="ECO:0000269" key="7">
    <source>
    </source>
</evidence>
<evidence type="ECO:0000269" key="8">
    <source>
    </source>
</evidence>
<evidence type="ECO:0000269" key="9">
    <source>
    </source>
</evidence>
<evidence type="ECO:0000269" key="10">
    <source>
    </source>
</evidence>
<evidence type="ECO:0000269" key="11">
    <source>
    </source>
</evidence>
<evidence type="ECO:0000269" key="12">
    <source>
    </source>
</evidence>
<evidence type="ECO:0000303" key="13">
    <source>
    </source>
</evidence>
<evidence type="ECO:0000305" key="14"/>
<evidence type="ECO:0007744" key="15">
    <source>
    </source>
</evidence>
<evidence type="ECO:0007829" key="16">
    <source>
        <dbReference type="PDB" id="1WGL"/>
    </source>
</evidence>
<evidence type="ECO:0007829" key="17">
    <source>
        <dbReference type="PDB" id="2N31"/>
    </source>
</evidence>
<name>TOLIP_HUMAN</name>